<protein>
    <recommendedName>
        <fullName>Uncharacterized protein UU155</fullName>
    </recommendedName>
</protein>
<gene>
    <name type="ordered locus">UU155</name>
</gene>
<name>Y155_UREPA</name>
<proteinExistence type="predicted"/>
<organism>
    <name type="scientific">Ureaplasma parvum serovar 3 (strain ATCC 700970)</name>
    <dbReference type="NCBI Taxonomy" id="273119"/>
    <lineage>
        <taxon>Bacteria</taxon>
        <taxon>Bacillati</taxon>
        <taxon>Mycoplasmatota</taxon>
        <taxon>Mycoplasmoidales</taxon>
        <taxon>Mycoplasmoidaceae</taxon>
        <taxon>Ureaplasma</taxon>
    </lineage>
</organism>
<accession>Q9PQY9</accession>
<reference key="1">
    <citation type="journal article" date="2000" name="Nature">
        <title>The complete sequence of the mucosal pathogen Ureaplasma urealyticum.</title>
        <authorList>
            <person name="Glass J.I."/>
            <person name="Lefkowitz E.J."/>
            <person name="Glass J.S."/>
            <person name="Heiner C.R."/>
            <person name="Chen E.Y."/>
            <person name="Cassell G.H."/>
        </authorList>
    </citation>
    <scope>NUCLEOTIDE SEQUENCE [LARGE SCALE GENOMIC DNA]</scope>
    <source>
        <strain>ATCC 700970</strain>
    </source>
</reference>
<dbReference type="EMBL" id="AF222894">
    <property type="protein sequence ID" value="AAF30561.1"/>
    <property type="molecule type" value="Genomic_DNA"/>
</dbReference>
<dbReference type="RefSeq" id="WP_004026102.1">
    <property type="nucleotide sequence ID" value="NC_002162.1"/>
</dbReference>
<dbReference type="STRING" id="273119.UU155"/>
<dbReference type="EnsemblBacteria" id="AAF30561">
    <property type="protein sequence ID" value="AAF30561"/>
    <property type="gene ID" value="UU155"/>
</dbReference>
<dbReference type="KEGG" id="uur:UU155"/>
<dbReference type="HOGENOM" id="CLU_1209377_0_0_14"/>
<dbReference type="OrthoDB" id="9868175at2"/>
<dbReference type="Proteomes" id="UP000000423">
    <property type="component" value="Chromosome"/>
</dbReference>
<keyword id="KW-1185">Reference proteome</keyword>
<sequence>MSSNNFDNNMPRIEFKKMPLTFIRLNTKKSNNAPFVSGSFWLADKVNANVYFSEYLMERIVPFENNKTNIVILENVSCYINFNWEEKRIIMRVVSFDNIFYKHQLSEQQTIDFVSAEKEYNYQTQTVNSYSNSDDEIEIINWLESDEQKAYFDSQLMFIDYKNQGFFKNKTMPDKLKNNANALELYKQIIKLDLEAFSGLYNGLKPFEAANKLIEKGYITLNDFFKYAI</sequence>
<feature type="chain" id="PRO_0000220814" description="Uncharacterized protein UU155">
    <location>
        <begin position="1"/>
        <end position="229"/>
    </location>
</feature>